<sequence length="763" mass="83159">MNDSQNCLRQREENSHLNPGNDFGHHQGAECTINHNNMPHRNAYTESTNDTEAKSIVMCDDPNAYQISYTNNEPAGDGAIETTSILLSQPLPLRSNVMSVLVGIFVAVGGFLFGYDTGLINSITDMPYVKTYIAPNHSYFTTSQIAILVSFLSLGTFFGALIAPYISDSYGRKPTIMFSTAVIFSIGNSLQVASGGLVLLIVGRVISGIGIGIISAVVPLYQAEAAQKNLRGAIISSYQWAITIGLLVSSAVSQGTHSKNGPSSYRIPIGLQYVWSSILAVGMIFLPESPRYYVLKDELNKAAKSLSFLRGLPIEDPRLLEELVEIKATYDYEASFGPSTLLDCFKTSENRPKQILRIFTGIAIQAFQQASGINFIFYYGVNFFNNTGVDNSYLVSFISYAVNVAFSIPGMYLVDRIGRRPVLLAGGVIMAIANLVIAIVGVSEGKTVVASKIMIAFICLFIAAFSATWGGVVWVVSAELYPLGVRSKCTAICAAANWLVNFTCALITPYIVDVGSHTSSMGPKIFFIWGGLNVVAVIVVYFAVYETRGLTLEEIDELFRKAPNSVISSKWNKKIRKRCLAFPISQQIEMKTNIKNAGKLDNNNSPIVQDDSHNIIDVDGFLENQIQSNDHMIAADKGSGSLVNIIDTAPLTSTEFKPVEHPPVNYVDLGNGLGLNTYNRGPPSIISDSTDEFYEENDSSYYNNNTERNGANSVNTYMAQLINSSSTTSNDTSFSPSHNSNARTSSNWTSDLASKHSQYTSPQ</sequence>
<organism>
    <name type="scientific">Saccharomyces cerevisiae (strain ATCC 204508 / S288c)</name>
    <name type="common">Baker's yeast</name>
    <dbReference type="NCBI Taxonomy" id="559292"/>
    <lineage>
        <taxon>Eukaryota</taxon>
        <taxon>Fungi</taxon>
        <taxon>Dikarya</taxon>
        <taxon>Ascomycota</taxon>
        <taxon>Saccharomycotina</taxon>
        <taxon>Saccharomycetes</taxon>
        <taxon>Saccharomycetales</taxon>
        <taxon>Saccharomycetaceae</taxon>
        <taxon>Saccharomyces</taxon>
    </lineage>
</organism>
<reference key="1">
    <citation type="journal article" date="1996" name="Yeast">
        <title>Analysis of a 26,756 bp segment from the left arm of yeast chromosome IV.</title>
        <authorList>
            <person name="Woelfl S."/>
            <person name="Haneman V."/>
            <person name="Saluz H.P."/>
        </authorList>
    </citation>
    <scope>NUCLEOTIDE SEQUENCE [GENOMIC DNA]</scope>
    <source>
        <strain>ATCC 96604 / S288c / FY1679</strain>
    </source>
</reference>
<reference key="2">
    <citation type="journal article" date="1997" name="Nature">
        <title>The nucleotide sequence of Saccharomyces cerevisiae chromosome IV.</title>
        <authorList>
            <person name="Jacq C."/>
            <person name="Alt-Moerbe J."/>
            <person name="Andre B."/>
            <person name="Arnold W."/>
            <person name="Bahr A."/>
            <person name="Ballesta J.P.G."/>
            <person name="Bargues M."/>
            <person name="Baron L."/>
            <person name="Becker A."/>
            <person name="Biteau N."/>
            <person name="Bloecker H."/>
            <person name="Blugeon C."/>
            <person name="Boskovic J."/>
            <person name="Brandt P."/>
            <person name="Brueckner M."/>
            <person name="Buitrago M.J."/>
            <person name="Coster F."/>
            <person name="Delaveau T."/>
            <person name="del Rey F."/>
            <person name="Dujon B."/>
            <person name="Eide L.G."/>
            <person name="Garcia-Cantalejo J.M."/>
            <person name="Goffeau A."/>
            <person name="Gomez-Peris A."/>
            <person name="Granotier C."/>
            <person name="Hanemann V."/>
            <person name="Hankeln T."/>
            <person name="Hoheisel J.D."/>
            <person name="Jaeger W."/>
            <person name="Jimenez A."/>
            <person name="Jonniaux J.-L."/>
            <person name="Kraemer C."/>
            <person name="Kuester H."/>
            <person name="Laamanen P."/>
            <person name="Legros Y."/>
            <person name="Louis E.J."/>
            <person name="Moeller-Rieker S."/>
            <person name="Monnet A."/>
            <person name="Moro M."/>
            <person name="Mueller-Auer S."/>
            <person name="Nussbaumer B."/>
            <person name="Paricio N."/>
            <person name="Paulin L."/>
            <person name="Perea J."/>
            <person name="Perez-Alonso M."/>
            <person name="Perez-Ortin J.E."/>
            <person name="Pohl T.M."/>
            <person name="Prydz H."/>
            <person name="Purnelle B."/>
            <person name="Rasmussen S.W."/>
            <person name="Remacha M.A."/>
            <person name="Revuelta J.L."/>
            <person name="Rieger M."/>
            <person name="Salom D."/>
            <person name="Saluz H.P."/>
            <person name="Saiz J.E."/>
            <person name="Saren A.-M."/>
            <person name="Schaefer M."/>
            <person name="Scharfe M."/>
            <person name="Schmidt E.R."/>
            <person name="Schneider C."/>
            <person name="Scholler P."/>
            <person name="Schwarz S."/>
            <person name="Soler-Mira A."/>
            <person name="Urrestarazu L.A."/>
            <person name="Verhasselt P."/>
            <person name="Vissers S."/>
            <person name="Voet M."/>
            <person name="Volckaert G."/>
            <person name="Wagner G."/>
            <person name="Wambutt R."/>
            <person name="Wedler E."/>
            <person name="Wedler H."/>
            <person name="Woelfl S."/>
            <person name="Harris D.E."/>
            <person name="Bowman S."/>
            <person name="Brown D."/>
            <person name="Churcher C.M."/>
            <person name="Connor R."/>
            <person name="Dedman K."/>
            <person name="Gentles S."/>
            <person name="Hamlin N."/>
            <person name="Hunt S."/>
            <person name="Jones L."/>
            <person name="McDonald S."/>
            <person name="Murphy L.D."/>
            <person name="Niblett D."/>
            <person name="Odell C."/>
            <person name="Oliver K."/>
            <person name="Rajandream M.A."/>
            <person name="Richards C."/>
            <person name="Shore L."/>
            <person name="Walsh S.V."/>
            <person name="Barrell B.G."/>
            <person name="Dietrich F.S."/>
            <person name="Mulligan J.T."/>
            <person name="Allen E."/>
            <person name="Araujo R."/>
            <person name="Aviles E."/>
            <person name="Berno A."/>
            <person name="Carpenter J."/>
            <person name="Chen E."/>
            <person name="Cherry J.M."/>
            <person name="Chung E."/>
            <person name="Duncan M."/>
            <person name="Hunicke-Smith S."/>
            <person name="Hyman R.W."/>
            <person name="Komp C."/>
            <person name="Lashkari D."/>
            <person name="Lew H."/>
            <person name="Lin D."/>
            <person name="Mosedale D."/>
            <person name="Nakahara K."/>
            <person name="Namath A."/>
            <person name="Oefner P."/>
            <person name="Oh C."/>
            <person name="Petel F.X."/>
            <person name="Roberts D."/>
            <person name="Schramm S."/>
            <person name="Schroeder M."/>
            <person name="Shogren T."/>
            <person name="Shroff N."/>
            <person name="Winant A."/>
            <person name="Yelton M.A."/>
            <person name="Botstein D."/>
            <person name="Davis R.W."/>
            <person name="Johnston M."/>
            <person name="Andrews S."/>
            <person name="Brinkman R."/>
            <person name="Cooper J."/>
            <person name="Ding H."/>
            <person name="Du Z."/>
            <person name="Favello A."/>
            <person name="Fulton L."/>
            <person name="Gattung S."/>
            <person name="Greco T."/>
            <person name="Hallsworth K."/>
            <person name="Hawkins J."/>
            <person name="Hillier L.W."/>
            <person name="Jier M."/>
            <person name="Johnson D."/>
            <person name="Johnston L."/>
            <person name="Kirsten J."/>
            <person name="Kucaba T."/>
            <person name="Langston Y."/>
            <person name="Latreille P."/>
            <person name="Le T."/>
            <person name="Mardis E."/>
            <person name="Menezes S."/>
            <person name="Miller N."/>
            <person name="Nhan M."/>
            <person name="Pauley A."/>
            <person name="Peluso D."/>
            <person name="Rifkin L."/>
            <person name="Riles L."/>
            <person name="Taich A."/>
            <person name="Trevaskis E."/>
            <person name="Vignati D."/>
            <person name="Wilcox L."/>
            <person name="Wohldman P."/>
            <person name="Vaudin M."/>
            <person name="Wilson R."/>
            <person name="Waterston R."/>
            <person name="Albermann K."/>
            <person name="Hani J."/>
            <person name="Heumann K."/>
            <person name="Kleine K."/>
            <person name="Mewes H.-W."/>
            <person name="Zollner A."/>
            <person name="Zaccaria P."/>
        </authorList>
    </citation>
    <scope>NUCLEOTIDE SEQUENCE [LARGE SCALE GENOMIC DNA]</scope>
    <source>
        <strain>ATCC 204508 / S288c</strain>
    </source>
</reference>
<reference key="3">
    <citation type="journal article" date="2014" name="G3 (Bethesda)">
        <title>The reference genome sequence of Saccharomyces cerevisiae: Then and now.</title>
        <authorList>
            <person name="Engel S.R."/>
            <person name="Dietrich F.S."/>
            <person name="Fisk D.G."/>
            <person name="Binkley G."/>
            <person name="Balakrishnan R."/>
            <person name="Costanzo M.C."/>
            <person name="Dwight S.S."/>
            <person name="Hitz B.C."/>
            <person name="Karra K."/>
            <person name="Nash R.S."/>
            <person name="Weng S."/>
            <person name="Wong E.D."/>
            <person name="Lloyd P."/>
            <person name="Skrzypek M.S."/>
            <person name="Miyasato S.R."/>
            <person name="Simison M."/>
            <person name="Cherry J.M."/>
        </authorList>
    </citation>
    <scope>GENOME REANNOTATION</scope>
    <source>
        <strain>ATCC 204508 / S288c</strain>
    </source>
</reference>
<reference key="4">
    <citation type="journal article" date="1991" name="Genetics">
        <title>Dominant and recessive suppressors that restore glucose transport in a yeast snf3 mutant.</title>
        <authorList>
            <person name="Marshall-Carlson L."/>
            <person name="Neigeborn L."/>
            <person name="Coons D."/>
            <person name="Bisson L."/>
            <person name="Carlson M."/>
        </authorList>
    </citation>
    <scope>GENE NAME</scope>
</reference>
<reference key="5">
    <citation type="journal article" date="1996" name="Proc. Natl. Acad. Sci. U.S.A.">
        <title>Two glucose transporters in Saccharomyces cerevisiae are glucose sensors that generate a signal for induction of gene expression.</title>
        <authorList>
            <person name="Oezcan S."/>
            <person name="Dover J."/>
            <person name="Rosenwald A.G."/>
            <person name="Woelfl S."/>
            <person name="Johnston M."/>
        </authorList>
    </citation>
    <scope>FUNCTION</scope>
    <scope>SUBCELLULAR LOCATION</scope>
    <scope>MUTAGENESIS OF ARG-231</scope>
</reference>
<reference key="6">
    <citation type="journal article" date="1998" name="EMBO J.">
        <title>Glucose sensing and signaling by two glucose receptors in the yeast Saccharomyces cerevisiae.</title>
        <authorList>
            <person name="Ozcan S."/>
            <person name="Dover J."/>
            <person name="Johnston M."/>
        </authorList>
    </citation>
    <scope>FUNCTION</scope>
</reference>
<reference key="7">
    <citation type="journal article" date="2004" name="Proc. Natl. Acad. Sci. U.S.A.">
        <title>Glucose sensing and signaling in Saccharomyces cerevisiae through the Rgt2 glucose sensor and casein kinase I.</title>
        <authorList>
            <person name="Moriya H."/>
            <person name="Johnston M."/>
        </authorList>
    </citation>
    <scope>FUNCTION</scope>
    <scope>INTERACTION WITH YCK1; MTH1 AND STD1</scope>
</reference>
<reference key="8">
    <citation type="journal article" date="2006" name="Proc. Natl. Acad. Sci. U.S.A.">
        <title>A global topology map of the Saccharomyces cerevisiae membrane proteome.</title>
        <authorList>
            <person name="Kim H."/>
            <person name="Melen K."/>
            <person name="Oesterberg M."/>
            <person name="von Heijne G."/>
        </authorList>
    </citation>
    <scope>TOPOLOGY [LARGE SCALE ANALYSIS]</scope>
    <source>
        <strain>ATCC 208353 / W303-1A</strain>
    </source>
</reference>
<reference key="9">
    <citation type="journal article" date="2016" name="Mol. Biol. Cell">
        <title>A novel role for yeast casein kinases in glucose sensing and signaling.</title>
        <authorList>
            <person name="Snowdon C."/>
            <person name="Johnston M."/>
        </authorList>
    </citation>
    <scope>FUNCTION</scope>
    <scope>INTERACTION WITH MTH1 AND STD1</scope>
    <scope>MUTAGENESIS OF 684-SER--THR-690</scope>
</reference>
<protein>
    <recommendedName>
        <fullName evidence="9">High glucose sensor RGT2</fullName>
    </recommendedName>
    <alternativeName>
        <fullName evidence="10">Low-affinity glucose receptor RGT2</fullName>
    </alternativeName>
    <alternativeName>
        <fullName evidence="11">Low-affinity transporter-like sensor RGT2</fullName>
    </alternativeName>
    <alternativeName>
        <fullName evidence="8">Restores glucose transport protein 2</fullName>
    </alternativeName>
</protein>
<feature type="chain" id="PRO_0000050389" description="High glucose sensor RGT2">
    <location>
        <begin position="1"/>
        <end position="763"/>
    </location>
</feature>
<feature type="topological domain" description="Cytoplasmic" evidence="12">
    <location>
        <begin position="1"/>
        <end position="99"/>
    </location>
</feature>
<feature type="transmembrane region" description="Helical; Name=1" evidence="1">
    <location>
        <begin position="100"/>
        <end position="120"/>
    </location>
</feature>
<feature type="topological domain" description="Extracellular" evidence="12">
    <location>
        <begin position="121"/>
        <end position="144"/>
    </location>
</feature>
<feature type="transmembrane region" description="Helical; Name=2" evidence="1">
    <location>
        <begin position="145"/>
        <end position="165"/>
    </location>
</feature>
<feature type="topological domain" description="Cytoplasmic" evidence="12">
    <location>
        <begin position="166"/>
        <end position="175"/>
    </location>
</feature>
<feature type="transmembrane region" description="Helical; Name=3" evidence="1">
    <location>
        <begin position="176"/>
        <end position="196"/>
    </location>
</feature>
<feature type="topological domain" description="Extracellular" evidence="12">
    <location>
        <position position="197"/>
    </location>
</feature>
<feature type="transmembrane region" description="Helical; Name=4" evidence="1">
    <location>
        <begin position="198"/>
        <end position="218"/>
    </location>
</feature>
<feature type="topological domain" description="Cytoplasmic" evidence="12">
    <location>
        <begin position="219"/>
        <end position="231"/>
    </location>
</feature>
<feature type="transmembrane region" description="Helical; Name=5" evidence="1">
    <location>
        <begin position="232"/>
        <end position="252"/>
    </location>
</feature>
<feature type="topological domain" description="Extracellular" evidence="12">
    <location>
        <begin position="253"/>
        <end position="266"/>
    </location>
</feature>
<feature type="transmembrane region" description="Helical; Name=6" evidence="1">
    <location>
        <begin position="267"/>
        <end position="287"/>
    </location>
</feature>
<feature type="topological domain" description="Cytoplasmic" evidence="12">
    <location>
        <begin position="288"/>
        <end position="357"/>
    </location>
</feature>
<feature type="transmembrane region" description="Helical; Name=7" evidence="1">
    <location>
        <begin position="358"/>
        <end position="378"/>
    </location>
</feature>
<feature type="topological domain" description="Extracellular" evidence="12">
    <location>
        <begin position="379"/>
        <end position="393"/>
    </location>
</feature>
<feature type="transmembrane region" description="Helical; Name=8" evidence="1">
    <location>
        <begin position="394"/>
        <end position="414"/>
    </location>
</feature>
<feature type="topological domain" description="Cytoplasmic" evidence="12">
    <location>
        <begin position="415"/>
        <end position="421"/>
    </location>
</feature>
<feature type="transmembrane region" description="Helical; Name=9" evidence="1">
    <location>
        <begin position="422"/>
        <end position="442"/>
    </location>
</feature>
<feature type="topological domain" description="Extracellular" evidence="12">
    <location>
        <begin position="443"/>
        <end position="452"/>
    </location>
</feature>
<feature type="transmembrane region" description="Helical; Name=10" evidence="1">
    <location>
        <begin position="453"/>
        <end position="473"/>
    </location>
</feature>
<feature type="topological domain" description="Cytoplasmic" evidence="12">
    <location>
        <begin position="474"/>
        <end position="491"/>
    </location>
</feature>
<feature type="transmembrane region" description="Helical; Name=11" evidence="1">
    <location>
        <begin position="492"/>
        <end position="512"/>
    </location>
</feature>
<feature type="topological domain" description="Extracellular" evidence="12">
    <location>
        <begin position="513"/>
        <end position="524"/>
    </location>
</feature>
<feature type="transmembrane region" description="Helical; Name=12" evidence="1">
    <location>
        <begin position="525"/>
        <end position="545"/>
    </location>
</feature>
<feature type="topological domain" description="Cytoplasmic" evidence="4">
    <location>
        <begin position="546"/>
        <end position="763"/>
    </location>
</feature>
<feature type="region of interest" description="Disordered" evidence="2">
    <location>
        <begin position="1"/>
        <end position="28"/>
    </location>
</feature>
<feature type="region of interest" description="Disordered" evidence="2">
    <location>
        <begin position="725"/>
        <end position="763"/>
    </location>
</feature>
<feature type="compositionally biased region" description="Low complexity" evidence="2">
    <location>
        <begin position="725"/>
        <end position="737"/>
    </location>
</feature>
<feature type="compositionally biased region" description="Polar residues" evidence="2">
    <location>
        <begin position="738"/>
        <end position="763"/>
    </location>
</feature>
<feature type="glycosylation site" description="N-linked (GlcNAc...) asparagine" evidence="1">
    <location>
        <position position="136"/>
    </location>
</feature>
<feature type="glycosylation site" description="N-linked (GlcNAc...) asparagine" evidence="1">
    <location>
        <position position="385"/>
    </location>
</feature>
<feature type="mutagenesis site" description="In RGT2-1; constitutively signaling glucose receptor." evidence="6">
    <original>R</original>
    <variation>K</variation>
    <location>
        <position position="231"/>
    </location>
</feature>
<feature type="mutagenesis site" description="In Rgt2(4SA); Abolishes Yck-dependent phosphorylation, interaction with MTH1 and STD1, and glucose signaling, but does not affect protein stability." evidence="5">
    <original>SIISDST</original>
    <variation>AIIADAA</variation>
    <location>
        <begin position="684"/>
        <end position="690"/>
    </location>
</feature>
<evidence type="ECO:0000255" key="1"/>
<evidence type="ECO:0000256" key="2">
    <source>
        <dbReference type="SAM" id="MobiDB-lite"/>
    </source>
</evidence>
<evidence type="ECO:0000269" key="3">
    <source>
    </source>
</evidence>
<evidence type="ECO:0000269" key="4">
    <source>
    </source>
</evidence>
<evidence type="ECO:0000269" key="5">
    <source>
    </source>
</evidence>
<evidence type="ECO:0000269" key="6">
    <source>
    </source>
</evidence>
<evidence type="ECO:0000269" key="7">
    <source>
    </source>
</evidence>
<evidence type="ECO:0000303" key="8">
    <source>
    </source>
</evidence>
<evidence type="ECO:0000303" key="9">
    <source>
    </source>
</evidence>
<evidence type="ECO:0000303" key="10">
    <source>
    </source>
</evidence>
<evidence type="ECO:0000305" key="11"/>
<evidence type="ECO:0000305" key="12">
    <source>
    </source>
</evidence>
<evidence type="ECO:0000312" key="13">
    <source>
        <dbReference type="SGD" id="S000002297"/>
    </source>
</evidence>
<gene>
    <name evidence="8" type="primary">RGT2</name>
    <name evidence="13" type="ordered locus">YDL138W</name>
    <name type="ORF">D2160</name>
</gene>
<comment type="function">
    <text evidence="3 5 6 7">Low-affinity high glucose sensor that is part of the sensor/receptor-repressor (SSR) glucose-signaling pathway, which detects extracellular glucose and induces expression of glucose transporters that bring glucose into the cell (PubMed:14755054, PubMed:27630263, PubMed:9564039). The transporter-like sensor generates an intracellular signal in the presence of high levels of glucose to promote high glucose-induced expression of HXT1 (PubMed:9564039). Binding of glucose to the RGT2 transmembrane domain activates a downstream signaling cascade, leading to phosphorylation of the RGT1 corepressors MTH1 and STD1, targeting them for SCF(Grr1)-dependent ubiquitination and degradation. Depletion of the corepressors robs RGT1 of its ability to repress expression of HXT genes, leading to accumulation of glucose transporters in the plasma membrane (PubMed:27630263, PubMed:8901598). Even though RGT2 is similar to glucose transporters, it appears to be unable to transport glucose (PubMed:9564039).</text>
</comment>
<comment type="subunit">
    <text evidence="3 5">Interacts with YCK1 (PubMed:14755054). Interacts with MTH1 and STD1 (PubMed:27630263).</text>
</comment>
<comment type="subcellular location">
    <subcellularLocation>
        <location evidence="6">Cell membrane</location>
        <topology evidence="1">Multi-pass membrane protein</topology>
    </subcellularLocation>
</comment>
<comment type="PTM">
    <text evidence="5">Phosphorylated in the C-terminal tail on Yck consensus sites in a yeast casein kinases YCK1 and YCK2 (Yck)-dependent manner. This phosphorylation is required for interaction with HXT corepressors MTH1 and STD1 and ultimately HXT expression.</text>
</comment>
<comment type="similarity">
    <text evidence="11">Belongs to the major facilitator superfamily. Sugar transporter (TC 2.A.1.1) family.</text>
</comment>
<keyword id="KW-1003">Cell membrane</keyword>
<keyword id="KW-0325">Glycoprotein</keyword>
<keyword id="KW-0472">Membrane</keyword>
<keyword id="KW-1185">Reference proteome</keyword>
<keyword id="KW-0762">Sugar transport</keyword>
<keyword id="KW-0812">Transmembrane</keyword>
<keyword id="KW-1133">Transmembrane helix</keyword>
<keyword id="KW-0813">Transport</keyword>
<accession>Q12300</accession>
<accession>D6VRL0</accession>
<proteinExistence type="evidence at protein level"/>
<name>RGT2_YEAST</name>
<dbReference type="EMBL" id="X96876">
    <property type="protein sequence ID" value="CAA65621.1"/>
    <property type="molecule type" value="Genomic_DNA"/>
</dbReference>
<dbReference type="EMBL" id="Z74186">
    <property type="protein sequence ID" value="CAA98711.1"/>
    <property type="molecule type" value="Genomic_DNA"/>
</dbReference>
<dbReference type="EMBL" id="BK006938">
    <property type="protein sequence ID" value="DAA11720.1"/>
    <property type="molecule type" value="Genomic_DNA"/>
</dbReference>
<dbReference type="PIR" id="S67684">
    <property type="entry name" value="S67684"/>
</dbReference>
<dbReference type="RefSeq" id="NP_010143.1">
    <property type="nucleotide sequence ID" value="NM_001180198.1"/>
</dbReference>
<dbReference type="SMR" id="Q12300"/>
<dbReference type="BioGRID" id="31923">
    <property type="interactions" value="182"/>
</dbReference>
<dbReference type="DIP" id="DIP-2865N"/>
<dbReference type="FunCoup" id="Q12300">
    <property type="interactions" value="272"/>
</dbReference>
<dbReference type="IntAct" id="Q12300">
    <property type="interactions" value="20"/>
</dbReference>
<dbReference type="MINT" id="Q12300"/>
<dbReference type="STRING" id="4932.YDL138W"/>
<dbReference type="TCDB" id="2.A.1.1.19">
    <property type="family name" value="the major facilitator superfamily (mfs)"/>
</dbReference>
<dbReference type="GlyCosmos" id="Q12300">
    <property type="glycosylation" value="2 sites, No reported glycans"/>
</dbReference>
<dbReference type="GlyGen" id="Q12300">
    <property type="glycosylation" value="2 sites"/>
</dbReference>
<dbReference type="iPTMnet" id="Q12300"/>
<dbReference type="PaxDb" id="4932-YDL138W"/>
<dbReference type="PeptideAtlas" id="Q12300"/>
<dbReference type="EnsemblFungi" id="YDL138W_mRNA">
    <property type="protein sequence ID" value="YDL138W"/>
    <property type="gene ID" value="YDL138W"/>
</dbReference>
<dbReference type="GeneID" id="851417"/>
<dbReference type="KEGG" id="sce:YDL138W"/>
<dbReference type="AGR" id="SGD:S000002297"/>
<dbReference type="SGD" id="S000002297">
    <property type="gene designation" value="RGT2"/>
</dbReference>
<dbReference type="VEuPathDB" id="FungiDB:YDL138W"/>
<dbReference type="eggNOG" id="KOG0254">
    <property type="taxonomic scope" value="Eukaryota"/>
</dbReference>
<dbReference type="GeneTree" id="ENSGT00940000176821"/>
<dbReference type="HOGENOM" id="CLU_001265_42_0_1"/>
<dbReference type="InParanoid" id="Q12300"/>
<dbReference type="OMA" id="VCQGTRK"/>
<dbReference type="OrthoDB" id="6612291at2759"/>
<dbReference type="BioCyc" id="YEAST:G3O-29537-MONOMER"/>
<dbReference type="BioGRID-ORCS" id="851417">
    <property type="hits" value="0 hits in 10 CRISPR screens"/>
</dbReference>
<dbReference type="PRO" id="PR:Q12300"/>
<dbReference type="Proteomes" id="UP000002311">
    <property type="component" value="Chromosome IV"/>
</dbReference>
<dbReference type="RNAct" id="Q12300">
    <property type="molecule type" value="protein"/>
</dbReference>
<dbReference type="GO" id="GO:0071944">
    <property type="term" value="C:cell periphery"/>
    <property type="evidence" value="ECO:0007005"/>
    <property type="project" value="SGD"/>
</dbReference>
<dbReference type="GO" id="GO:0016020">
    <property type="term" value="C:membrane"/>
    <property type="evidence" value="ECO:0000318"/>
    <property type="project" value="GO_Central"/>
</dbReference>
<dbReference type="GO" id="GO:0005886">
    <property type="term" value="C:plasma membrane"/>
    <property type="evidence" value="ECO:0000315"/>
    <property type="project" value="SGD"/>
</dbReference>
<dbReference type="GO" id="GO:0005351">
    <property type="term" value="F:carbohydrate:proton symporter activity"/>
    <property type="evidence" value="ECO:0000318"/>
    <property type="project" value="GO_Central"/>
</dbReference>
<dbReference type="GO" id="GO:0005536">
    <property type="term" value="F:D-glucose binding"/>
    <property type="evidence" value="ECO:0000315"/>
    <property type="project" value="SGD"/>
</dbReference>
<dbReference type="GO" id="GO:0008643">
    <property type="term" value="P:carbohydrate transport"/>
    <property type="evidence" value="ECO:0000318"/>
    <property type="project" value="GO_Central"/>
</dbReference>
<dbReference type="GO" id="GO:0010255">
    <property type="term" value="P:glucose mediated signaling pathway"/>
    <property type="evidence" value="ECO:0000315"/>
    <property type="project" value="SGD"/>
</dbReference>
<dbReference type="CDD" id="cd17356">
    <property type="entry name" value="MFS_HXT"/>
    <property type="match status" value="1"/>
</dbReference>
<dbReference type="FunFam" id="1.20.1250.20:FF:000115">
    <property type="entry name" value="High-affinity glucose transporter"/>
    <property type="match status" value="1"/>
</dbReference>
<dbReference type="Gene3D" id="1.20.1250.20">
    <property type="entry name" value="MFS general substrate transporter like domains"/>
    <property type="match status" value="1"/>
</dbReference>
<dbReference type="InterPro" id="IPR020846">
    <property type="entry name" value="MFS_dom"/>
</dbReference>
<dbReference type="InterPro" id="IPR005828">
    <property type="entry name" value="MFS_sugar_transport-like"/>
</dbReference>
<dbReference type="InterPro" id="IPR050360">
    <property type="entry name" value="MFS_Sugar_Transporters"/>
</dbReference>
<dbReference type="InterPro" id="IPR036259">
    <property type="entry name" value="MFS_trans_sf"/>
</dbReference>
<dbReference type="InterPro" id="IPR003663">
    <property type="entry name" value="Sugar/inositol_transpt"/>
</dbReference>
<dbReference type="InterPro" id="IPR005829">
    <property type="entry name" value="Sugar_transporter_CS"/>
</dbReference>
<dbReference type="NCBIfam" id="TIGR00879">
    <property type="entry name" value="SP"/>
    <property type="match status" value="1"/>
</dbReference>
<dbReference type="PANTHER" id="PTHR48022:SF16">
    <property type="entry name" value="HIGH GLUCOSE SENSOR RGT2-RELATED"/>
    <property type="match status" value="1"/>
</dbReference>
<dbReference type="PANTHER" id="PTHR48022">
    <property type="entry name" value="PLASTIDIC GLUCOSE TRANSPORTER 4"/>
    <property type="match status" value="1"/>
</dbReference>
<dbReference type="Pfam" id="PF00083">
    <property type="entry name" value="Sugar_tr"/>
    <property type="match status" value="1"/>
</dbReference>
<dbReference type="PRINTS" id="PR00171">
    <property type="entry name" value="SUGRTRNSPORT"/>
</dbReference>
<dbReference type="SUPFAM" id="SSF103473">
    <property type="entry name" value="MFS general substrate transporter"/>
    <property type="match status" value="1"/>
</dbReference>
<dbReference type="PROSITE" id="PS50850">
    <property type="entry name" value="MFS"/>
    <property type="match status" value="1"/>
</dbReference>
<dbReference type="PROSITE" id="PS00216">
    <property type="entry name" value="SUGAR_TRANSPORT_1"/>
    <property type="match status" value="1"/>
</dbReference>
<dbReference type="PROSITE" id="PS00217">
    <property type="entry name" value="SUGAR_TRANSPORT_2"/>
    <property type="match status" value="1"/>
</dbReference>